<gene>
    <name evidence="3" type="primary">QPT1b</name>
    <name evidence="6" type="ORF">LOC107829123</name>
</gene>
<sequence>MFKVLPFTAIVHPNAITAPRLVVKMSAIATKNAVESFVVKPPAHPTYDLKGVIQLALSEDAGDIGDVTCKATIPIDMESEAHFLAKEDGIVAGIALAEMIFAEVDPSLKMEWSINDGDKVHKGLKFGKVQGKAHSIVIAERVVLNFMQRMSGIATLTKAMADAAHPATILETRKTAPGLRLVDKWAVLIGGGKNHRMGLFDMVMIKDNHISAAGGVSKALNSVDQYLEQNKLQMGVEVETRTIAEVHEVLEYASQTKTSLTRIMLDNMVVPLSNGDIEVSMLEEAVDLINGRFETEASGNVTLETVHKIGQTGVTYISSGALTHSVKALDISLKIDTELALEVGRRTKRA</sequence>
<protein>
    <recommendedName>
        <fullName evidence="3">Quinolinate phosphoribosyltransferase [decarboxylating] 1b</fullName>
        <shortName evidence="3">NtQPT1b</shortName>
        <ecNumber evidence="4 5">2.4.2.19</ecNumber>
    </recommendedName>
</protein>
<dbReference type="EC" id="2.4.2.19" evidence="4 5"/>
<dbReference type="RefSeq" id="XP_016512047.1">
    <property type="nucleotide sequence ID" value="XM_016656561.1"/>
</dbReference>
<dbReference type="RefSeq" id="XP_016512048.1">
    <property type="nucleotide sequence ID" value="XM_016656562.1"/>
</dbReference>
<dbReference type="SMR" id="A0A1S4DF18"/>
<dbReference type="STRING" id="4097.A0A1S4DF18"/>
<dbReference type="PaxDb" id="4097-A0A1S4DF18"/>
<dbReference type="KEGG" id="nta:107829123"/>
<dbReference type="OrthoDB" id="10067394at2759"/>
<dbReference type="UniPathway" id="UPA00107"/>
<dbReference type="UniPathway" id="UPA00253">
    <property type="reaction ID" value="UER00331"/>
</dbReference>
<dbReference type="Proteomes" id="UP000084051">
    <property type="component" value="Unplaced"/>
</dbReference>
<dbReference type="GO" id="GO:0005737">
    <property type="term" value="C:cytoplasm"/>
    <property type="evidence" value="ECO:0000318"/>
    <property type="project" value="GO_Central"/>
</dbReference>
<dbReference type="GO" id="GO:0004514">
    <property type="term" value="F:nicotinate-nucleotide diphosphorylase (carboxylating) activity"/>
    <property type="evidence" value="ECO:0000318"/>
    <property type="project" value="GO_Central"/>
</dbReference>
<dbReference type="GO" id="GO:0009820">
    <property type="term" value="P:alkaloid metabolic process"/>
    <property type="evidence" value="ECO:0007669"/>
    <property type="project" value="UniProtKB-KW"/>
</dbReference>
<dbReference type="GO" id="GO:0009435">
    <property type="term" value="P:NAD biosynthetic process"/>
    <property type="evidence" value="ECO:0000318"/>
    <property type="project" value="GO_Central"/>
</dbReference>
<dbReference type="GO" id="GO:0042179">
    <property type="term" value="P:nicotine biosynthetic process"/>
    <property type="evidence" value="ECO:0007669"/>
    <property type="project" value="UniProtKB-UniPathway"/>
</dbReference>
<dbReference type="GO" id="GO:0034213">
    <property type="term" value="P:quinolinate catabolic process"/>
    <property type="evidence" value="ECO:0000318"/>
    <property type="project" value="GO_Central"/>
</dbReference>
<dbReference type="CDD" id="cd01572">
    <property type="entry name" value="QPRTase"/>
    <property type="match status" value="1"/>
</dbReference>
<dbReference type="FunFam" id="3.90.1170.20:FF:000001">
    <property type="entry name" value="Nicotinate-nucleotide diphosphorylase (Carboxylating)"/>
    <property type="match status" value="1"/>
</dbReference>
<dbReference type="FunFam" id="3.20.20.70:FF:000149">
    <property type="entry name" value="Nicotinate-nucleotide pyrophosphorylase [carboxylating]"/>
    <property type="match status" value="1"/>
</dbReference>
<dbReference type="Gene3D" id="3.20.20.70">
    <property type="entry name" value="Aldolase class I"/>
    <property type="match status" value="1"/>
</dbReference>
<dbReference type="Gene3D" id="3.90.1170.20">
    <property type="entry name" value="Quinolinate phosphoribosyl transferase, N-terminal domain"/>
    <property type="match status" value="1"/>
</dbReference>
<dbReference type="InterPro" id="IPR013785">
    <property type="entry name" value="Aldolase_TIM"/>
</dbReference>
<dbReference type="InterPro" id="IPR004393">
    <property type="entry name" value="NadC"/>
</dbReference>
<dbReference type="InterPro" id="IPR027277">
    <property type="entry name" value="NadC/ModD"/>
</dbReference>
<dbReference type="InterPro" id="IPR036068">
    <property type="entry name" value="Nicotinate_pribotase-like_C"/>
</dbReference>
<dbReference type="InterPro" id="IPR037128">
    <property type="entry name" value="Quinolinate_PRibosylTase_N_sf"/>
</dbReference>
<dbReference type="InterPro" id="IPR002638">
    <property type="entry name" value="Quinolinate_PRibosylTrfase_C"/>
</dbReference>
<dbReference type="InterPro" id="IPR022412">
    <property type="entry name" value="Quinolinate_PRibosylTrfase_N"/>
</dbReference>
<dbReference type="NCBIfam" id="TIGR00078">
    <property type="entry name" value="nadC"/>
    <property type="match status" value="1"/>
</dbReference>
<dbReference type="PANTHER" id="PTHR32179">
    <property type="entry name" value="NICOTINATE-NUCLEOTIDE PYROPHOSPHORYLASE [CARBOXYLATING]"/>
    <property type="match status" value="1"/>
</dbReference>
<dbReference type="PANTHER" id="PTHR32179:SF3">
    <property type="entry name" value="NICOTINATE-NUCLEOTIDE PYROPHOSPHORYLASE [CARBOXYLATING]"/>
    <property type="match status" value="1"/>
</dbReference>
<dbReference type="Pfam" id="PF01729">
    <property type="entry name" value="QRPTase_C"/>
    <property type="match status" value="1"/>
</dbReference>
<dbReference type="Pfam" id="PF02749">
    <property type="entry name" value="QRPTase_N"/>
    <property type="match status" value="1"/>
</dbReference>
<dbReference type="SUPFAM" id="SSF51690">
    <property type="entry name" value="Nicotinate/Quinolinate PRTase C-terminal domain-like"/>
    <property type="match status" value="1"/>
</dbReference>
<dbReference type="SUPFAM" id="SSF54675">
    <property type="entry name" value="Nicotinate/Quinolinate PRTase N-terminal domain-like"/>
    <property type="match status" value="1"/>
</dbReference>
<keyword id="KW-0017">Alkaloid metabolism</keyword>
<keyword id="KW-0025">Alternative splicing</keyword>
<keyword id="KW-0328">Glycosyltransferase</keyword>
<keyword id="KW-0662">Pyridine nucleotide biosynthesis</keyword>
<keyword id="KW-1185">Reference proteome</keyword>
<keyword id="KW-0808">Transferase</keyword>
<feature type="chain" id="PRO_0000455794" description="Quinolinate phosphoribosyltransferase [decarboxylating] 1b">
    <location>
        <begin position="1"/>
        <end position="350"/>
    </location>
</feature>
<feature type="binding site" evidence="1">
    <location>
        <position position="141"/>
    </location>
    <ligand>
        <name>substrate</name>
    </ligand>
</feature>
<feature type="binding site" evidence="1">
    <location>
        <begin position="172"/>
        <end position="174"/>
    </location>
    <ligand>
        <name>substrate</name>
    </ligand>
</feature>
<feature type="binding site" evidence="1">
    <location>
        <position position="196"/>
    </location>
    <ligand>
        <name>substrate</name>
    </ligand>
</feature>
<feature type="binding site" evidence="1">
    <location>
        <position position="206"/>
    </location>
    <ligand>
        <name>substrate</name>
    </ligand>
</feature>
<feature type="binding site" evidence="1">
    <location>
        <position position="239"/>
    </location>
    <ligand>
        <name>substrate</name>
    </ligand>
</feature>
<feature type="binding site" evidence="1">
    <location>
        <position position="266"/>
    </location>
    <ligand>
        <name>substrate</name>
    </ligand>
</feature>
<feature type="binding site" evidence="1">
    <location>
        <begin position="298"/>
        <end position="300"/>
    </location>
    <ligand>
        <name>substrate</name>
    </ligand>
</feature>
<feature type="binding site" evidence="1">
    <location>
        <begin position="319"/>
        <end position="321"/>
    </location>
    <ligand>
        <name>substrate</name>
    </ligand>
</feature>
<feature type="splice variant" id="VSP_061528" description="In isoform 2.">
    <location>
        <begin position="1"/>
        <end position="24"/>
    </location>
</feature>
<name>QPT1B_TOBAC</name>
<reference key="1">
    <citation type="journal article" date="2014" name="Nat. Commun.">
        <title>The tobacco genome sequence and its comparison with those of tomato and potato.</title>
        <authorList>
            <person name="Sierro N."/>
            <person name="Battey J.N."/>
            <person name="Ouadi S."/>
            <person name="Bakaher N."/>
            <person name="Bovet L."/>
            <person name="Willig A."/>
            <person name="Goepfert S."/>
            <person name="Peitsch M.C."/>
            <person name="Ivanov N.V."/>
        </authorList>
    </citation>
    <scope>NUCLEOTIDE SEQUENCE [LARGE SCALE GENOMIC DNA]</scope>
    <source>
        <strain>cv. TN90</strain>
    </source>
</reference>
<reference key="2">
    <citation type="journal article" date="2013" name="Phytochemistry">
        <title>Molecular genetics of alkaloid biosynthesis in Nicotiana tabacum.</title>
        <authorList>
            <person name="Dewey R.E."/>
            <person name="Xie J."/>
        </authorList>
    </citation>
    <scope>FUNCTION</scope>
    <scope>CATALYTIC ACTIVITY</scope>
    <scope>PATHWAY</scope>
    <scope>REVIEW ON ALKALOID BIOSYNTHESIS IN NICOTIANA TABACUM</scope>
</reference>
<reference key="3">
    <citation type="journal article" date="2015" name="Mol. Genet. Genomics">
        <title>Current status and prospects for the study of Nicotiana genomics, genetics, and nicotine biosynthesis genes.</title>
        <authorList>
            <person name="Wang X."/>
            <person name="Bennetzen J.L."/>
        </authorList>
    </citation>
    <scope>FUNCTION</scope>
    <scope>CATALYTIC ACTIVITY</scope>
    <scope>PATHWAY</scope>
    <scope>REVIEW ON NICOTINE BIOSYNTHESIS</scope>
</reference>
<reference key="4">
    <citation type="journal article" date="2019" name="Food Chem. Toxicol.">
        <title>Antiparasitic properties of leaf extracts derived from selected Nicotiana species and Nicotiana tabacum varieties.</title>
        <authorList>
            <person name="Schorderet Weber S."/>
            <person name="Kaminski K.P."/>
            <person name="Perret J.-L."/>
            <person name="Leroy P."/>
            <person name="Mazurov A."/>
            <person name="Peitsch M.C."/>
            <person name="Ivanov N.V."/>
            <person name="Hoeng J."/>
        </authorList>
    </citation>
    <scope>FUNCTION</scope>
    <source>
        <strain>cv. Burley Stella</strain>
        <strain>cv. Burley TN90</strain>
        <strain>cv. Virginia ITB 683</strain>
        <strain>cv. Virginia K326</strain>
    </source>
</reference>
<comment type="function">
    <text evidence="2 4 5">Involved in the biosynthesis of pyridine alkaloid natural products, leading mainly to the production of anabasine, anatabine, nicotine and nornicotine, effective deterrents against herbivores with antiparasitic and pesticide properties (neurotoxins); nornicotine serves as the precursor in the synthesis of the carcinogen compound N'-nitrosonornicotine (NNN) (Probable) (PubMed:31276744). Involved in the catabolism of quinolinic acid (QA) (Probable).</text>
</comment>
<comment type="catalytic activity">
    <reaction evidence="4 5">
        <text>nicotinate beta-D-ribonucleotide + CO2 + diphosphate = quinolinate + 5-phospho-alpha-D-ribose 1-diphosphate + 2 H(+)</text>
        <dbReference type="Rhea" id="RHEA:12733"/>
        <dbReference type="ChEBI" id="CHEBI:15378"/>
        <dbReference type="ChEBI" id="CHEBI:16526"/>
        <dbReference type="ChEBI" id="CHEBI:29959"/>
        <dbReference type="ChEBI" id="CHEBI:33019"/>
        <dbReference type="ChEBI" id="CHEBI:57502"/>
        <dbReference type="ChEBI" id="CHEBI:58017"/>
        <dbReference type="EC" id="2.4.2.19"/>
    </reaction>
    <physiologicalReaction direction="right-to-left" evidence="4 5">
        <dbReference type="Rhea" id="RHEA:12735"/>
    </physiologicalReaction>
</comment>
<comment type="pathway">
    <text evidence="4 5">Alkaloid biosynthesis; nicotine biosynthesis.</text>
</comment>
<comment type="pathway">
    <text evidence="4 5">Cofactor biosynthesis; NAD(+) biosynthesis; nicotinate D-ribonucleotide from quinolinate: step 1/1.</text>
</comment>
<comment type="alternative products">
    <event type="alternative splicing"/>
    <isoform>
        <id>A0A1S4DF18-1</id>
        <name>1</name>
        <sequence type="displayed"/>
    </isoform>
    <isoform>
        <id>A0A1S4DF18-2</id>
        <name>2</name>
        <sequence type="described" ref="VSP_061528"/>
    </isoform>
</comment>
<comment type="similarity">
    <text evidence="3">Belongs to the NadC/ModD family.</text>
</comment>
<organism>
    <name type="scientific">Nicotiana tabacum</name>
    <name type="common">Common tobacco</name>
    <dbReference type="NCBI Taxonomy" id="4097"/>
    <lineage>
        <taxon>Eukaryota</taxon>
        <taxon>Viridiplantae</taxon>
        <taxon>Streptophyta</taxon>
        <taxon>Embryophyta</taxon>
        <taxon>Tracheophyta</taxon>
        <taxon>Spermatophyta</taxon>
        <taxon>Magnoliopsida</taxon>
        <taxon>eudicotyledons</taxon>
        <taxon>Gunneridae</taxon>
        <taxon>Pentapetalae</taxon>
        <taxon>asterids</taxon>
        <taxon>lamiids</taxon>
        <taxon>Solanales</taxon>
        <taxon>Solanaceae</taxon>
        <taxon>Nicotianoideae</taxon>
        <taxon>Nicotianeae</taxon>
        <taxon>Nicotiana</taxon>
    </lineage>
</organism>
<evidence type="ECO:0000250" key="1">
    <source>
        <dbReference type="UniProtKB" id="P9WJJ7"/>
    </source>
</evidence>
<evidence type="ECO:0000269" key="2">
    <source>
    </source>
</evidence>
<evidence type="ECO:0000305" key="3"/>
<evidence type="ECO:0000305" key="4">
    <source>
    </source>
</evidence>
<evidence type="ECO:0000305" key="5">
    <source>
    </source>
</evidence>
<evidence type="ECO:0000312" key="6">
    <source>
        <dbReference type="RefSeq" id="XP_016512047.1"/>
    </source>
</evidence>
<accession>A0A1S4DF18</accession>
<accession>A0A1S4DFD0</accession>
<proteinExistence type="evidence at protein level"/>